<organism>
    <name type="scientific">Drosophila borealis</name>
    <name type="common">Fruit fly</name>
    <dbReference type="NCBI Taxonomy" id="40368"/>
    <lineage>
        <taxon>Eukaryota</taxon>
        <taxon>Metazoa</taxon>
        <taxon>Ecdysozoa</taxon>
        <taxon>Arthropoda</taxon>
        <taxon>Hexapoda</taxon>
        <taxon>Insecta</taxon>
        <taxon>Pterygota</taxon>
        <taxon>Neoptera</taxon>
        <taxon>Endopterygota</taxon>
        <taxon>Diptera</taxon>
        <taxon>Brachycera</taxon>
        <taxon>Muscomorpha</taxon>
        <taxon>Ephydroidea</taxon>
        <taxon>Drosophilidae</taxon>
        <taxon>Drosophila</taxon>
    </lineage>
</organism>
<protein>
    <recommendedName>
        <fullName>Alcohol dehydrogenase</fullName>
        <ecNumber>1.1.1.1</ecNumber>
    </recommendedName>
</protein>
<accession>P48584</accession>
<reference key="1">
    <citation type="journal article" date="1996" name="Mol. Biol. Evol.">
        <title>Molecular phylogeny and genome evolution in the Drosophila virilis species group: duplications of the alcohol dehydrogenase gene.</title>
        <authorList>
            <person name="Nurminsky D.I."/>
            <person name="Moriyama E.N."/>
            <person name="Lozovskaya E.R."/>
            <person name="Hartl D.L."/>
        </authorList>
    </citation>
    <scope>NUCLEOTIDE SEQUENCE [GENOMIC DNA]</scope>
</reference>
<proteinExistence type="inferred from homology"/>
<evidence type="ECO:0000250" key="1"/>
<evidence type="ECO:0000255" key="2">
    <source>
        <dbReference type="PROSITE-ProRule" id="PRU10001"/>
    </source>
</evidence>
<evidence type="ECO:0000305" key="3"/>
<keyword id="KW-0520">NAD</keyword>
<keyword id="KW-0560">Oxidoreductase</keyword>
<feature type="initiator methionine" description="Removed" evidence="1">
    <location>
        <position position="1"/>
    </location>
</feature>
<feature type="chain" id="PRO_0000054455" description="Alcohol dehydrogenase">
    <location>
        <begin position="2"/>
        <end position="254"/>
    </location>
</feature>
<feature type="active site" description="Proton acceptor" evidence="2">
    <location>
        <position position="151"/>
    </location>
</feature>
<feature type="binding site" evidence="1">
    <location>
        <begin position="10"/>
        <end position="33"/>
    </location>
    <ligand>
        <name>NAD(+)</name>
        <dbReference type="ChEBI" id="CHEBI:57540"/>
    </ligand>
</feature>
<feature type="binding site" evidence="1">
    <location>
        <position position="138"/>
    </location>
    <ligand>
        <name>substrate</name>
    </ligand>
</feature>
<comment type="catalytic activity">
    <reaction evidence="2">
        <text>a primary alcohol + NAD(+) = an aldehyde + NADH + H(+)</text>
        <dbReference type="Rhea" id="RHEA:10736"/>
        <dbReference type="ChEBI" id="CHEBI:15378"/>
        <dbReference type="ChEBI" id="CHEBI:15734"/>
        <dbReference type="ChEBI" id="CHEBI:17478"/>
        <dbReference type="ChEBI" id="CHEBI:57540"/>
        <dbReference type="ChEBI" id="CHEBI:57945"/>
        <dbReference type="EC" id="1.1.1.1"/>
    </reaction>
</comment>
<comment type="catalytic activity">
    <reaction evidence="2">
        <text>a secondary alcohol + NAD(+) = a ketone + NADH + H(+)</text>
        <dbReference type="Rhea" id="RHEA:10740"/>
        <dbReference type="ChEBI" id="CHEBI:15378"/>
        <dbReference type="ChEBI" id="CHEBI:17087"/>
        <dbReference type="ChEBI" id="CHEBI:35681"/>
        <dbReference type="ChEBI" id="CHEBI:57540"/>
        <dbReference type="ChEBI" id="CHEBI:57945"/>
        <dbReference type="EC" id="1.1.1.1"/>
    </reaction>
</comment>
<comment type="subunit">
    <text>Homodimer.</text>
</comment>
<comment type="similarity">
    <text evidence="3">Belongs to the short-chain dehydrogenases/reductases (SDR) family.</text>
</comment>
<gene>
    <name type="primary">Adh</name>
</gene>
<sequence>MAIANKNIIFVAGLGGIGLDTSREIVKSGPKNLVILDRIDNPTAIAELKAINPKVTVTFYPYDVTVPLAETTKLLKTIFAQLKTVDLLINGAGILDDHQIERTIAVNFTGTVNTTTAIMEFWDKRKGGPGGVVANICSVTGFNAIYQVPVYSASKAAALSFTNSLARLAPITGVTAYSINPGITRTPLVHRFNSWLDVEPRVGELLLEHPTQTTLECAQNFVKAIEANKNGAIWQLDLGQLIAVEWTKHWDSHI</sequence>
<dbReference type="EC" id="1.1.1.1"/>
<dbReference type="EMBL" id="U26839">
    <property type="protein sequence ID" value="AAB02625.1"/>
    <property type="molecule type" value="Genomic_DNA"/>
</dbReference>
<dbReference type="SMR" id="P48584"/>
<dbReference type="GO" id="GO:0005737">
    <property type="term" value="C:cytoplasm"/>
    <property type="evidence" value="ECO:0007669"/>
    <property type="project" value="TreeGrafter"/>
</dbReference>
<dbReference type="GO" id="GO:0004022">
    <property type="term" value="F:alcohol dehydrogenase (NAD+) activity"/>
    <property type="evidence" value="ECO:0000250"/>
    <property type="project" value="UniProtKB"/>
</dbReference>
<dbReference type="GO" id="GO:0006066">
    <property type="term" value="P:alcohol metabolic process"/>
    <property type="evidence" value="ECO:0007669"/>
    <property type="project" value="InterPro"/>
</dbReference>
<dbReference type="CDD" id="cd05323">
    <property type="entry name" value="ADH_SDR_c_like"/>
    <property type="match status" value="1"/>
</dbReference>
<dbReference type="FunFam" id="3.40.50.720:FF:000302">
    <property type="entry name" value="Alcohol dehydrogenase"/>
    <property type="match status" value="1"/>
</dbReference>
<dbReference type="Gene3D" id="3.40.50.720">
    <property type="entry name" value="NAD(P)-binding Rossmann-like Domain"/>
    <property type="match status" value="1"/>
</dbReference>
<dbReference type="InterPro" id="IPR002425">
    <property type="entry name" value="ADH_Drosophila-type"/>
</dbReference>
<dbReference type="InterPro" id="IPR036291">
    <property type="entry name" value="NAD(P)-bd_dom_sf"/>
</dbReference>
<dbReference type="InterPro" id="IPR020904">
    <property type="entry name" value="Sc_DH/Rdtase_CS"/>
</dbReference>
<dbReference type="InterPro" id="IPR002347">
    <property type="entry name" value="SDR_fam"/>
</dbReference>
<dbReference type="PANTHER" id="PTHR44229">
    <property type="entry name" value="15-HYDROXYPROSTAGLANDIN DEHYDROGENASE [NAD(+)]"/>
    <property type="match status" value="1"/>
</dbReference>
<dbReference type="PANTHER" id="PTHR44229:SF8">
    <property type="entry name" value="ALCOHOL DEHYDROGENASE-RELATED"/>
    <property type="match status" value="1"/>
</dbReference>
<dbReference type="Pfam" id="PF00106">
    <property type="entry name" value="adh_short"/>
    <property type="match status" value="1"/>
</dbReference>
<dbReference type="PRINTS" id="PR01168">
    <property type="entry name" value="ALCDHDRGNASE"/>
</dbReference>
<dbReference type="PRINTS" id="PR01167">
    <property type="entry name" value="INSADHFAMILY"/>
</dbReference>
<dbReference type="PRINTS" id="PR00080">
    <property type="entry name" value="SDRFAMILY"/>
</dbReference>
<dbReference type="SUPFAM" id="SSF51735">
    <property type="entry name" value="NAD(P)-binding Rossmann-fold domains"/>
    <property type="match status" value="1"/>
</dbReference>
<dbReference type="PROSITE" id="PS00061">
    <property type="entry name" value="ADH_SHORT"/>
    <property type="match status" value="1"/>
</dbReference>
<name>ADH_DROBO</name>